<proteinExistence type="evidence at protein level"/>
<accession>Q9FFL1</accession>
<gene>
    <name type="primary">RMV1</name>
    <name type="ordered locus">At5g05630</name>
    <name type="ORF">MJJ3.2</name>
</gene>
<reference key="1">
    <citation type="journal article" date="1997" name="DNA Res.">
        <title>Structural analysis of Arabidopsis thaliana chromosome 5. I. Sequence features of the 1.6 Mb regions covered by twenty physically assigned P1 clones.</title>
        <authorList>
            <person name="Sato S."/>
            <person name="Kotani H."/>
            <person name="Nakamura Y."/>
            <person name="Kaneko T."/>
            <person name="Asamizu E."/>
            <person name="Fukami M."/>
            <person name="Miyajima N."/>
            <person name="Tabata S."/>
        </authorList>
    </citation>
    <scope>NUCLEOTIDE SEQUENCE [LARGE SCALE GENOMIC DNA]</scope>
    <source>
        <strain>cv. Columbia</strain>
    </source>
</reference>
<reference key="2">
    <citation type="journal article" date="2017" name="Plant J.">
        <title>Araport11: a complete reannotation of the Arabidopsis thaliana reference genome.</title>
        <authorList>
            <person name="Cheng C.Y."/>
            <person name="Krishnakumar V."/>
            <person name="Chan A.P."/>
            <person name="Thibaud-Nissen F."/>
            <person name="Schobel S."/>
            <person name="Town C.D."/>
        </authorList>
    </citation>
    <scope>GENOME REANNOTATION</scope>
    <source>
        <strain>cv. Columbia</strain>
    </source>
</reference>
<reference key="3">
    <citation type="journal article" date="2002" name="Science">
        <title>Functional annotation of a full-length Arabidopsis cDNA collection.</title>
        <authorList>
            <person name="Seki M."/>
            <person name="Narusaka M."/>
            <person name="Kamiya A."/>
            <person name="Ishida J."/>
            <person name="Satou M."/>
            <person name="Sakurai T."/>
            <person name="Nakajima M."/>
            <person name="Enju A."/>
            <person name="Akiyama K."/>
            <person name="Oono Y."/>
            <person name="Muramatsu M."/>
            <person name="Hayashizaki Y."/>
            <person name="Kawai J."/>
            <person name="Carninci P."/>
            <person name="Itoh M."/>
            <person name="Ishii Y."/>
            <person name="Arakawa T."/>
            <person name="Shibata K."/>
            <person name="Shinagawa A."/>
            <person name="Shinozaki K."/>
        </authorList>
    </citation>
    <scope>NUCLEOTIDE SEQUENCE [LARGE SCALE MRNA]</scope>
    <source>
        <strain>cv. Columbia</strain>
    </source>
</reference>
<reference key="4">
    <citation type="journal article" date="2003" name="Science">
        <title>Empirical analysis of transcriptional activity in the Arabidopsis genome.</title>
        <authorList>
            <person name="Yamada K."/>
            <person name="Lim J."/>
            <person name="Dale J.M."/>
            <person name="Chen H."/>
            <person name="Shinn P."/>
            <person name="Palm C.J."/>
            <person name="Southwick A.M."/>
            <person name="Wu H.C."/>
            <person name="Kim C.J."/>
            <person name="Nguyen M."/>
            <person name="Pham P.K."/>
            <person name="Cheuk R.F."/>
            <person name="Karlin-Newmann G."/>
            <person name="Liu S.X."/>
            <person name="Lam B."/>
            <person name="Sakano H."/>
            <person name="Wu T."/>
            <person name="Yu G."/>
            <person name="Miranda M."/>
            <person name="Quach H.L."/>
            <person name="Tripp M."/>
            <person name="Chang C.H."/>
            <person name="Lee J.M."/>
            <person name="Toriumi M.J."/>
            <person name="Chan M.M."/>
            <person name="Tang C.C."/>
            <person name="Onodera C.S."/>
            <person name="Deng J.M."/>
            <person name="Akiyama K."/>
            <person name="Ansari Y."/>
            <person name="Arakawa T."/>
            <person name="Banh J."/>
            <person name="Banno F."/>
            <person name="Bowser L."/>
            <person name="Brooks S.Y."/>
            <person name="Carninci P."/>
            <person name="Chao Q."/>
            <person name="Choy N."/>
            <person name="Enju A."/>
            <person name="Goldsmith A.D."/>
            <person name="Gurjal M."/>
            <person name="Hansen N.F."/>
            <person name="Hayashizaki Y."/>
            <person name="Johnson-Hopson C."/>
            <person name="Hsuan V.W."/>
            <person name="Iida K."/>
            <person name="Karnes M."/>
            <person name="Khan S."/>
            <person name="Koesema E."/>
            <person name="Ishida J."/>
            <person name="Jiang P.X."/>
            <person name="Jones T."/>
            <person name="Kawai J."/>
            <person name="Kamiya A."/>
            <person name="Meyers C."/>
            <person name="Nakajima M."/>
            <person name="Narusaka M."/>
            <person name="Seki M."/>
            <person name="Sakurai T."/>
            <person name="Satou M."/>
            <person name="Tamse R."/>
            <person name="Vaysberg M."/>
            <person name="Wallender E.K."/>
            <person name="Wong C."/>
            <person name="Yamamura Y."/>
            <person name="Yuan S."/>
            <person name="Shinozaki K."/>
            <person name="Davis R.W."/>
            <person name="Theologis A."/>
            <person name="Ecker J.R."/>
        </authorList>
    </citation>
    <scope>NUCLEOTIDE SEQUENCE [LARGE SCALE MRNA]</scope>
    <source>
        <strain>cv. Columbia</strain>
    </source>
</reference>
<reference key="5">
    <citation type="journal article" date="2012" name="Proc. Natl. Acad. Sci. U.S.A.">
        <title>Natural variation in a polyamine transporter determines paraquat tolerance in Arabidopsis.</title>
        <authorList>
            <person name="Fujita M."/>
            <person name="Fujita Y."/>
            <person name="Iuchi S."/>
            <person name="Yamada K."/>
            <person name="Kobayashi Y."/>
            <person name="Urano K."/>
            <person name="Kobayashi M."/>
            <person name="Yamaguchi-Shinozaki K."/>
            <person name="Shinozaki K."/>
        </authorList>
    </citation>
    <scope>FUNCTION</scope>
    <scope>BIOPHYSICOCHEMICAL PROPERTIES</scope>
    <scope>SUBCELLULAR LOCATION</scope>
    <scope>DEVELOPMENTAL STAGE</scope>
    <scope>MUTAGENESIS OF ILE-377</scope>
    <scope>DISRUPTION PHENOTYPE</scope>
    <source>
        <strain>cv. Landsberg erecta</strain>
    </source>
</reference>
<evidence type="ECO:0000255" key="1"/>
<evidence type="ECO:0000256" key="2">
    <source>
        <dbReference type="SAM" id="MobiDB-lite"/>
    </source>
</evidence>
<evidence type="ECO:0000269" key="3">
    <source>
    </source>
</evidence>
<evidence type="ECO:0000305" key="4"/>
<evidence type="ECO:0000305" key="5">
    <source>
    </source>
</evidence>
<keyword id="KW-1003">Cell membrane</keyword>
<keyword id="KW-0472">Membrane</keyword>
<keyword id="KW-1185">Reference proteome</keyword>
<keyword id="KW-0769">Symport</keyword>
<keyword id="KW-0812">Transmembrane</keyword>
<keyword id="KW-1133">Transmembrane helix</keyword>
<keyword id="KW-0813">Transport</keyword>
<sequence>MTELSSPNLDSASQKPRISTENPPPPPPHISIGVTTGDPATSPARTVNQIKKITVLPLVFLIFYEVSGGPFGIEDSVKAAGPLLAIVGFIVFPFIWSIPEALITAEMGTMFPENGGYVVWVTLAMGPYWGFQQGWVKWLSGVIDNALYPILFLDYLKSGIPILGSGIPRVAAILVLTVALTYLNYRGLSIVGVAAVLLGVFSILPFVVMSFMSIPKLKPSRWLVVSKKMKGVNWSLYLNTLFWNLNYWDSVSTLTGEVENPSKTLPRALFYALLLVVFSYIFPVLTGTGAIALDQKLWTDGYFADIGKVIGGVWLGWWIQAAAATSNMGMFLAEMSSDSFQLLGMAERGMLPEVFAKRSRYRTPWVGILFSASGVIILSWLSFQEIVAAENLLYCFGMVLEFITFVRLRMKYPAASRPFKIPVGVLGSVLMCIPPTVLIGVIMAFTNLKVALVSLAAIVIGLVLQPCLKQVEKKGWLKFSTSSHLPNLME</sequence>
<dbReference type="EMBL" id="AB005237">
    <property type="protein sequence ID" value="BAB09657.1"/>
    <property type="molecule type" value="Genomic_DNA"/>
</dbReference>
<dbReference type="EMBL" id="CP002688">
    <property type="protein sequence ID" value="AED90901.1"/>
    <property type="molecule type" value="Genomic_DNA"/>
</dbReference>
<dbReference type="EMBL" id="AK119108">
    <property type="protein sequence ID" value="BAC43680.1"/>
    <property type="molecule type" value="mRNA"/>
</dbReference>
<dbReference type="EMBL" id="BT008298">
    <property type="protein sequence ID" value="AAP37657.1"/>
    <property type="molecule type" value="mRNA"/>
</dbReference>
<dbReference type="RefSeq" id="NP_196182.1">
    <property type="nucleotide sequence ID" value="NM_120645.3"/>
</dbReference>
<dbReference type="SMR" id="Q9FFL1"/>
<dbReference type="FunCoup" id="Q9FFL1">
    <property type="interactions" value="110"/>
</dbReference>
<dbReference type="STRING" id="3702.Q9FFL1"/>
<dbReference type="TCDB" id="2.A.3.12.3">
    <property type="family name" value="the amino acid-polyamine-organocation (apc) family"/>
</dbReference>
<dbReference type="iPTMnet" id="Q9FFL1"/>
<dbReference type="PaxDb" id="3702-AT5G05630.1"/>
<dbReference type="ProteomicsDB" id="228186"/>
<dbReference type="EnsemblPlants" id="AT5G05630.1">
    <property type="protein sequence ID" value="AT5G05630.1"/>
    <property type="gene ID" value="AT5G05630"/>
</dbReference>
<dbReference type="GeneID" id="830446"/>
<dbReference type="Gramene" id="AT5G05630.1">
    <property type="protein sequence ID" value="AT5G05630.1"/>
    <property type="gene ID" value="AT5G05630"/>
</dbReference>
<dbReference type="KEGG" id="ath:AT5G05630"/>
<dbReference type="Araport" id="AT5G05630"/>
<dbReference type="TAIR" id="AT5G05630">
    <property type="gene designation" value="RMV1"/>
</dbReference>
<dbReference type="eggNOG" id="KOG1287">
    <property type="taxonomic scope" value="Eukaryota"/>
</dbReference>
<dbReference type="HOGENOM" id="CLU_007946_17_3_1"/>
<dbReference type="InParanoid" id="Q9FFL1"/>
<dbReference type="OMA" id="GWWIQAA"/>
<dbReference type="PhylomeDB" id="Q9FFL1"/>
<dbReference type="PRO" id="PR:Q9FFL1"/>
<dbReference type="Proteomes" id="UP000006548">
    <property type="component" value="Chromosome 5"/>
</dbReference>
<dbReference type="ExpressionAtlas" id="Q9FFL1">
    <property type="expression patterns" value="baseline and differential"/>
</dbReference>
<dbReference type="GO" id="GO:0005886">
    <property type="term" value="C:plasma membrane"/>
    <property type="evidence" value="ECO:0000314"/>
    <property type="project" value="TAIR"/>
</dbReference>
<dbReference type="GO" id="GO:0015203">
    <property type="term" value="F:polyamine transmembrane transporter activity"/>
    <property type="evidence" value="ECO:0000314"/>
    <property type="project" value="TAIR"/>
</dbReference>
<dbReference type="GO" id="GO:0015293">
    <property type="term" value="F:symporter activity"/>
    <property type="evidence" value="ECO:0007669"/>
    <property type="project" value="UniProtKB-KW"/>
</dbReference>
<dbReference type="GO" id="GO:0015839">
    <property type="term" value="P:cadaverine transport"/>
    <property type="evidence" value="ECO:0000315"/>
    <property type="project" value="TAIR"/>
</dbReference>
<dbReference type="GO" id="GO:0015846">
    <property type="term" value="P:polyamine transport"/>
    <property type="evidence" value="ECO:0000314"/>
    <property type="project" value="TAIR"/>
</dbReference>
<dbReference type="GO" id="GO:0009408">
    <property type="term" value="P:response to heat"/>
    <property type="evidence" value="ECO:0000315"/>
    <property type="project" value="TAIR"/>
</dbReference>
<dbReference type="FunFam" id="1.20.1740.10:FF:000041">
    <property type="entry name" value="Amino acid permease, putative"/>
    <property type="match status" value="1"/>
</dbReference>
<dbReference type="Gene3D" id="1.20.1740.10">
    <property type="entry name" value="Amino acid/polyamine transporter I"/>
    <property type="match status" value="1"/>
</dbReference>
<dbReference type="InterPro" id="IPR002293">
    <property type="entry name" value="AA/rel_permease1"/>
</dbReference>
<dbReference type="InterPro" id="IPR044566">
    <property type="entry name" value="RMV1-like"/>
</dbReference>
<dbReference type="PANTHER" id="PTHR45826">
    <property type="entry name" value="POLYAMINE TRANSPORTER PUT1"/>
    <property type="match status" value="1"/>
</dbReference>
<dbReference type="PANTHER" id="PTHR45826:SF14">
    <property type="entry name" value="POLYAMINE TRANSPORTER RMV1"/>
    <property type="match status" value="1"/>
</dbReference>
<dbReference type="Pfam" id="PF13520">
    <property type="entry name" value="AA_permease_2"/>
    <property type="match status" value="1"/>
</dbReference>
<dbReference type="PIRSF" id="PIRSF006060">
    <property type="entry name" value="AA_transporter"/>
    <property type="match status" value="1"/>
</dbReference>
<protein>
    <recommendedName>
        <fullName>Polyamine transporter RMV1</fullName>
    </recommendedName>
    <alternativeName>
        <fullName>Protein RESISTANT TO METHYL VIOLOGEN 1</fullName>
    </alternativeName>
</protein>
<feature type="chain" id="PRO_0000418912" description="Polyamine transporter RMV1">
    <location>
        <begin position="1"/>
        <end position="490"/>
    </location>
</feature>
<feature type="transmembrane region" description="Helical" evidence="1">
    <location>
        <begin position="53"/>
        <end position="73"/>
    </location>
</feature>
<feature type="transmembrane region" description="Helical" evidence="1">
    <location>
        <begin position="83"/>
        <end position="103"/>
    </location>
</feature>
<feature type="transmembrane region" description="Helical" evidence="1">
    <location>
        <begin position="116"/>
        <end position="136"/>
    </location>
</feature>
<feature type="transmembrane region" description="Helical" evidence="1">
    <location>
        <begin position="160"/>
        <end position="180"/>
    </location>
</feature>
<feature type="transmembrane region" description="Helical" evidence="1">
    <location>
        <begin position="188"/>
        <end position="208"/>
    </location>
</feature>
<feature type="transmembrane region" description="Helical" evidence="1">
    <location>
        <begin position="231"/>
        <end position="248"/>
    </location>
</feature>
<feature type="transmembrane region" description="Helical" evidence="1">
    <location>
        <begin position="273"/>
        <end position="293"/>
    </location>
</feature>
<feature type="transmembrane region" description="Helical" evidence="1">
    <location>
        <begin position="303"/>
        <end position="323"/>
    </location>
</feature>
<feature type="transmembrane region" description="Helical" evidence="1">
    <location>
        <begin position="363"/>
        <end position="383"/>
    </location>
</feature>
<feature type="transmembrane region" description="Helical" evidence="1">
    <location>
        <begin position="386"/>
        <end position="406"/>
    </location>
</feature>
<feature type="transmembrane region" description="Helical" evidence="1">
    <location>
        <begin position="425"/>
        <end position="445"/>
    </location>
</feature>
<feature type="transmembrane region" description="Helical" evidence="1">
    <location>
        <begin position="448"/>
        <end position="468"/>
    </location>
</feature>
<feature type="region of interest" description="Disordered" evidence="2">
    <location>
        <begin position="1"/>
        <end position="38"/>
    </location>
</feature>
<feature type="compositionally biased region" description="Polar residues" evidence="2">
    <location>
        <begin position="1"/>
        <end position="21"/>
    </location>
</feature>
<feature type="mutagenesis site" description="Loss of sensitivity to paraquat." evidence="3">
    <original>I</original>
    <variation>F</variation>
    <location>
        <position position="377"/>
    </location>
</feature>
<organism>
    <name type="scientific">Arabidopsis thaliana</name>
    <name type="common">Mouse-ear cress</name>
    <dbReference type="NCBI Taxonomy" id="3702"/>
    <lineage>
        <taxon>Eukaryota</taxon>
        <taxon>Viridiplantae</taxon>
        <taxon>Streptophyta</taxon>
        <taxon>Embryophyta</taxon>
        <taxon>Tracheophyta</taxon>
        <taxon>Spermatophyta</taxon>
        <taxon>Magnoliopsida</taxon>
        <taxon>eudicotyledons</taxon>
        <taxon>Gunneridae</taxon>
        <taxon>Pentapetalae</taxon>
        <taxon>rosids</taxon>
        <taxon>malvids</taxon>
        <taxon>Brassicales</taxon>
        <taxon>Brassicaceae</taxon>
        <taxon>Camelineae</taxon>
        <taxon>Arabidopsis</taxon>
    </lineage>
</organism>
<name>RMV1_ARATH</name>
<comment type="function">
    <text evidence="3">Cell membrane polyamine/proton symporter involved in the polyamine uptake in cells. Possesses high affinity for spermine and spermidine and lower affinity for putrescine. Transports paraquat, a polyamine analog, and thus confers sensitivity to this chemical which is used as a herbicide.</text>
</comment>
<comment type="biophysicochemical properties">
    <kinetics>
        <KM evidence="3">0.6 uM for spermine</KM>
        <KM evidence="3">2.2 uM for spermidine</KM>
        <KM evidence="3">56.5 uM for putrescine</KM>
        <KM evidence="3">24.4 uM for paraquat</KM>
    </kinetics>
</comment>
<comment type="subcellular location">
    <subcellularLocation>
        <location evidence="5">Cell membrane</location>
        <topology evidence="5">Multi-pass membrane protein</topology>
    </subcellularLocation>
    <text>Plasma membrane.</text>
</comment>
<comment type="developmental stage">
    <text evidence="3">Expressed in hypocotyls and petioles of cotyledons in 1- to 3-day-old seedlings.</text>
</comment>
<comment type="disruption phenotype">
    <text evidence="3">No visible phenotype under normal growth conditions, but mutant plants show increased tolerance to paraquat.</text>
</comment>
<comment type="miscellaneous">
    <text evidence="5">Methyl viologen is the brand name of paraquat. Plants over-expressing RMV1 show hypersensitivity to paraquat (PubMed:22492932).</text>
</comment>
<comment type="similarity">
    <text evidence="4">Belongs to the amino acid-polyamine-organocation (APC) superfamily. Polyamine:cation symporter (PHS) (TC 2.A.3.12) family.</text>
</comment>